<reference key="1">
    <citation type="journal article" date="2007" name="Nat. Biotechnol.">
        <title>Complete genome sequence of the erythromycin-producing bacterium Saccharopolyspora erythraea NRRL23338.</title>
        <authorList>
            <person name="Oliynyk M."/>
            <person name="Samborskyy M."/>
            <person name="Lester J.B."/>
            <person name="Mironenko T."/>
            <person name="Scott N."/>
            <person name="Dickens S."/>
            <person name="Haydock S.F."/>
            <person name="Leadlay P.F."/>
        </authorList>
    </citation>
    <scope>NUCLEOTIDE SEQUENCE [LARGE SCALE GENOMIC DNA]</scope>
    <source>
        <strain>ATCC 11635 / DSM 40517 / JCM 4748 / NBRC 13426 / NCIMB 8594 / NRRL 2338</strain>
    </source>
</reference>
<keyword id="KW-0963">Cytoplasm</keyword>
<keyword id="KW-0251">Elongation factor</keyword>
<keyword id="KW-0648">Protein biosynthesis</keyword>
<keyword id="KW-1185">Reference proteome</keyword>
<evidence type="ECO:0000255" key="1">
    <source>
        <dbReference type="HAMAP-Rule" id="MF_00141"/>
    </source>
</evidence>
<gene>
    <name evidence="1" type="primary">efp</name>
    <name type="ordered locus">SACE_2075</name>
</gene>
<protein>
    <recommendedName>
        <fullName evidence="1">Elongation factor P</fullName>
        <shortName evidence="1">EF-P</shortName>
    </recommendedName>
</protein>
<proteinExistence type="inferred from homology"/>
<sequence length="188" mass="20391">MASTNDLKNGLVLNLDGQLWSVVNFQHVKPGKGGAFVRTTLKNVLSGKVVDKTFNAGVKVDTANVDRREMTYLYNDGTDYVFMDPDTYDQVGVAASVVGDAADYMLENSQVVVARHDDNPLYVELPASVELDIQHTDPGVQGDRSTGGTKPATLETGAEIQVPLFLNTGDKVKVDPRDGRYLGRVSTK</sequence>
<comment type="function">
    <text evidence="1">Involved in peptide bond synthesis. Stimulates efficient translation and peptide-bond synthesis on native or reconstituted 70S ribosomes in vitro. Probably functions indirectly by altering the affinity of the ribosome for aminoacyl-tRNA, thus increasing their reactivity as acceptors for peptidyl transferase.</text>
</comment>
<comment type="pathway">
    <text evidence="1">Protein biosynthesis; polypeptide chain elongation.</text>
</comment>
<comment type="subcellular location">
    <subcellularLocation>
        <location evidence="1">Cytoplasm</location>
    </subcellularLocation>
</comment>
<comment type="similarity">
    <text evidence="1">Belongs to the elongation factor P family.</text>
</comment>
<organism>
    <name type="scientific">Saccharopolyspora erythraea (strain ATCC 11635 / DSM 40517 / JCM 4748 / NBRC 13426 / NCIMB 8594 / NRRL 2338)</name>
    <dbReference type="NCBI Taxonomy" id="405948"/>
    <lineage>
        <taxon>Bacteria</taxon>
        <taxon>Bacillati</taxon>
        <taxon>Actinomycetota</taxon>
        <taxon>Actinomycetes</taxon>
        <taxon>Pseudonocardiales</taxon>
        <taxon>Pseudonocardiaceae</taxon>
        <taxon>Saccharopolyspora</taxon>
    </lineage>
</organism>
<name>EFP_SACEN</name>
<accession>A4FBF7</accession>
<feature type="chain" id="PRO_1000010843" description="Elongation factor P">
    <location>
        <begin position="1"/>
        <end position="188"/>
    </location>
</feature>
<dbReference type="EMBL" id="AM420293">
    <property type="protein sequence ID" value="CAM01382.1"/>
    <property type="molecule type" value="Genomic_DNA"/>
</dbReference>
<dbReference type="RefSeq" id="WP_009943045.1">
    <property type="nucleotide sequence ID" value="NC_009142.1"/>
</dbReference>
<dbReference type="SMR" id="A4FBF7"/>
<dbReference type="STRING" id="405948.SACE_2075"/>
<dbReference type="KEGG" id="sen:SACE_2075"/>
<dbReference type="eggNOG" id="COG0231">
    <property type="taxonomic scope" value="Bacteria"/>
</dbReference>
<dbReference type="HOGENOM" id="CLU_074944_0_1_11"/>
<dbReference type="OrthoDB" id="9801844at2"/>
<dbReference type="UniPathway" id="UPA00345"/>
<dbReference type="Proteomes" id="UP000006728">
    <property type="component" value="Chromosome"/>
</dbReference>
<dbReference type="GO" id="GO:0005737">
    <property type="term" value="C:cytoplasm"/>
    <property type="evidence" value="ECO:0007669"/>
    <property type="project" value="UniProtKB-SubCell"/>
</dbReference>
<dbReference type="GO" id="GO:0003746">
    <property type="term" value="F:translation elongation factor activity"/>
    <property type="evidence" value="ECO:0007669"/>
    <property type="project" value="UniProtKB-UniRule"/>
</dbReference>
<dbReference type="GO" id="GO:0043043">
    <property type="term" value="P:peptide biosynthetic process"/>
    <property type="evidence" value="ECO:0007669"/>
    <property type="project" value="InterPro"/>
</dbReference>
<dbReference type="CDD" id="cd04470">
    <property type="entry name" value="S1_EF-P_repeat_1"/>
    <property type="match status" value="1"/>
</dbReference>
<dbReference type="CDD" id="cd05794">
    <property type="entry name" value="S1_EF-P_repeat_2"/>
    <property type="match status" value="1"/>
</dbReference>
<dbReference type="FunFam" id="2.30.30.30:FF:000003">
    <property type="entry name" value="Elongation factor P"/>
    <property type="match status" value="1"/>
</dbReference>
<dbReference type="FunFam" id="2.40.50.140:FF:000004">
    <property type="entry name" value="Elongation factor P"/>
    <property type="match status" value="1"/>
</dbReference>
<dbReference type="FunFam" id="2.40.50.140:FF:000009">
    <property type="entry name" value="Elongation factor P"/>
    <property type="match status" value="1"/>
</dbReference>
<dbReference type="Gene3D" id="2.30.30.30">
    <property type="match status" value="1"/>
</dbReference>
<dbReference type="Gene3D" id="2.40.50.140">
    <property type="entry name" value="Nucleic acid-binding proteins"/>
    <property type="match status" value="2"/>
</dbReference>
<dbReference type="HAMAP" id="MF_00141">
    <property type="entry name" value="EF_P"/>
    <property type="match status" value="1"/>
</dbReference>
<dbReference type="InterPro" id="IPR015365">
    <property type="entry name" value="Elong-fact-P_C"/>
</dbReference>
<dbReference type="InterPro" id="IPR012340">
    <property type="entry name" value="NA-bd_OB-fold"/>
</dbReference>
<dbReference type="InterPro" id="IPR014722">
    <property type="entry name" value="Rib_uL2_dom2"/>
</dbReference>
<dbReference type="InterPro" id="IPR020599">
    <property type="entry name" value="Transl_elong_fac_P/YeiP"/>
</dbReference>
<dbReference type="InterPro" id="IPR013185">
    <property type="entry name" value="Transl_elong_KOW-like"/>
</dbReference>
<dbReference type="InterPro" id="IPR001059">
    <property type="entry name" value="Transl_elong_P/YeiP_cen"/>
</dbReference>
<dbReference type="InterPro" id="IPR013852">
    <property type="entry name" value="Transl_elong_P/YeiP_CS"/>
</dbReference>
<dbReference type="InterPro" id="IPR011768">
    <property type="entry name" value="Transl_elongation_fac_P"/>
</dbReference>
<dbReference type="InterPro" id="IPR008991">
    <property type="entry name" value="Translation_prot_SH3-like_sf"/>
</dbReference>
<dbReference type="NCBIfam" id="TIGR00038">
    <property type="entry name" value="efp"/>
    <property type="match status" value="1"/>
</dbReference>
<dbReference type="NCBIfam" id="NF001810">
    <property type="entry name" value="PRK00529.1"/>
    <property type="match status" value="1"/>
</dbReference>
<dbReference type="PANTHER" id="PTHR30053">
    <property type="entry name" value="ELONGATION FACTOR P"/>
    <property type="match status" value="1"/>
</dbReference>
<dbReference type="PANTHER" id="PTHR30053:SF12">
    <property type="entry name" value="ELONGATION FACTOR P (EF-P) FAMILY PROTEIN"/>
    <property type="match status" value="1"/>
</dbReference>
<dbReference type="Pfam" id="PF01132">
    <property type="entry name" value="EFP"/>
    <property type="match status" value="1"/>
</dbReference>
<dbReference type="Pfam" id="PF08207">
    <property type="entry name" value="EFP_N"/>
    <property type="match status" value="1"/>
</dbReference>
<dbReference type="Pfam" id="PF09285">
    <property type="entry name" value="Elong-fact-P_C"/>
    <property type="match status" value="1"/>
</dbReference>
<dbReference type="PIRSF" id="PIRSF005901">
    <property type="entry name" value="EF-P"/>
    <property type="match status" value="1"/>
</dbReference>
<dbReference type="SMART" id="SM01185">
    <property type="entry name" value="EFP"/>
    <property type="match status" value="1"/>
</dbReference>
<dbReference type="SMART" id="SM00841">
    <property type="entry name" value="Elong-fact-P_C"/>
    <property type="match status" value="1"/>
</dbReference>
<dbReference type="SUPFAM" id="SSF50249">
    <property type="entry name" value="Nucleic acid-binding proteins"/>
    <property type="match status" value="2"/>
</dbReference>
<dbReference type="SUPFAM" id="SSF50104">
    <property type="entry name" value="Translation proteins SH3-like domain"/>
    <property type="match status" value="1"/>
</dbReference>
<dbReference type="PROSITE" id="PS01275">
    <property type="entry name" value="EFP"/>
    <property type="match status" value="1"/>
</dbReference>